<feature type="chain" id="PRO_0000167294" description="Small ribosomal subunit protein bS16cz">
    <location>
        <begin position="1"/>
        <end position="79"/>
    </location>
</feature>
<dbReference type="EMBL" id="AP000423">
    <property type="protein sequence ID" value="BAA84367.1"/>
    <property type="molecule type" value="Genomic_DNA"/>
</dbReference>
<dbReference type="RefSeq" id="NP_051041.1">
    <property type="nucleotide sequence ID" value="NC_000932.1"/>
</dbReference>
<dbReference type="SMR" id="P56806"/>
<dbReference type="FunCoup" id="P56806">
    <property type="interactions" value="10"/>
</dbReference>
<dbReference type="STRING" id="3702.P56806"/>
<dbReference type="PaxDb" id="3702-ATCG00050.1"/>
<dbReference type="EnsemblPlants" id="ATCG00050.1">
    <property type="protein sequence ID" value="ATCG00050.1"/>
    <property type="gene ID" value="ATCG00050"/>
</dbReference>
<dbReference type="GeneID" id="844798"/>
<dbReference type="Gramene" id="ATCG00050.1">
    <property type="protein sequence ID" value="ATCG00050.1"/>
    <property type="gene ID" value="ATCG00050"/>
</dbReference>
<dbReference type="KEGG" id="ath:ArthCp004"/>
<dbReference type="Araport" id="ATCG00050"/>
<dbReference type="TAIR" id="ATCG00050">
    <property type="gene designation" value="RPS16"/>
</dbReference>
<dbReference type="eggNOG" id="KOG3419">
    <property type="taxonomic scope" value="Eukaryota"/>
</dbReference>
<dbReference type="HOGENOM" id="CLU_100590_5_2_1"/>
<dbReference type="InParanoid" id="P56806"/>
<dbReference type="OMA" id="KQPIYRI"/>
<dbReference type="PRO" id="PR:P56806"/>
<dbReference type="Proteomes" id="UP000006548">
    <property type="component" value="Chloroplast Pltd"/>
</dbReference>
<dbReference type="ExpressionAtlas" id="P56806">
    <property type="expression patterns" value="baseline and differential"/>
</dbReference>
<dbReference type="GO" id="GO:0009507">
    <property type="term" value="C:chloroplast"/>
    <property type="evidence" value="ECO:0007669"/>
    <property type="project" value="UniProtKB-SubCell"/>
</dbReference>
<dbReference type="GO" id="GO:1990904">
    <property type="term" value="C:ribonucleoprotein complex"/>
    <property type="evidence" value="ECO:0007669"/>
    <property type="project" value="UniProtKB-KW"/>
</dbReference>
<dbReference type="GO" id="GO:0005840">
    <property type="term" value="C:ribosome"/>
    <property type="evidence" value="ECO:0007669"/>
    <property type="project" value="UniProtKB-KW"/>
</dbReference>
<dbReference type="GO" id="GO:0003735">
    <property type="term" value="F:structural constituent of ribosome"/>
    <property type="evidence" value="ECO:0007669"/>
    <property type="project" value="InterPro"/>
</dbReference>
<dbReference type="GO" id="GO:0006412">
    <property type="term" value="P:translation"/>
    <property type="evidence" value="ECO:0007669"/>
    <property type="project" value="UniProtKB-UniRule"/>
</dbReference>
<dbReference type="FunFam" id="3.30.1320.10:FF:000003">
    <property type="entry name" value="30S ribosomal protein S16, chloroplastic"/>
    <property type="match status" value="1"/>
</dbReference>
<dbReference type="Gene3D" id="3.30.1320.10">
    <property type="match status" value="1"/>
</dbReference>
<dbReference type="HAMAP" id="MF_00385">
    <property type="entry name" value="Ribosomal_bS16"/>
    <property type="match status" value="1"/>
</dbReference>
<dbReference type="InterPro" id="IPR000307">
    <property type="entry name" value="Ribosomal_bS16"/>
</dbReference>
<dbReference type="InterPro" id="IPR020592">
    <property type="entry name" value="Ribosomal_bS16_CS"/>
</dbReference>
<dbReference type="InterPro" id="IPR023803">
    <property type="entry name" value="Ribosomal_bS16_dom_sf"/>
</dbReference>
<dbReference type="NCBIfam" id="TIGR00002">
    <property type="entry name" value="S16"/>
    <property type="match status" value="1"/>
</dbReference>
<dbReference type="PANTHER" id="PTHR12919">
    <property type="entry name" value="30S RIBOSOMAL PROTEIN S16"/>
    <property type="match status" value="1"/>
</dbReference>
<dbReference type="PANTHER" id="PTHR12919:SF20">
    <property type="entry name" value="SMALL RIBOSOMAL SUBUNIT PROTEIN BS16M"/>
    <property type="match status" value="1"/>
</dbReference>
<dbReference type="Pfam" id="PF00886">
    <property type="entry name" value="Ribosomal_S16"/>
    <property type="match status" value="1"/>
</dbReference>
<dbReference type="SUPFAM" id="SSF54565">
    <property type="entry name" value="Ribosomal protein S16"/>
    <property type="match status" value="1"/>
</dbReference>
<dbReference type="PROSITE" id="PS00732">
    <property type="entry name" value="RIBOSOMAL_S16"/>
    <property type="match status" value="1"/>
</dbReference>
<proteinExistence type="evidence at transcript level"/>
<evidence type="ECO:0000255" key="1">
    <source>
        <dbReference type="HAMAP-Rule" id="MF_00385"/>
    </source>
</evidence>
<evidence type="ECO:0000269" key="2">
    <source>
    </source>
</evidence>
<evidence type="ECO:0000303" key="3">
    <source>
    </source>
</evidence>
<evidence type="ECO:0000305" key="4">
    <source>
    </source>
</evidence>
<sequence>MVKLRLKRCGRKQRAVYRILAIDVRYRREGRDLSKVGFYDPITNQTFLNLSAILDFLKKGAQPTRTAHDISKKAGIFTE</sequence>
<gene>
    <name evidence="1" type="primary">rps16</name>
    <name type="ordered locus">AtCg00050</name>
</gene>
<name>RR16_ARATH</name>
<accession>P56806</accession>
<protein>
    <recommendedName>
        <fullName evidence="1 3">Small ribosomal subunit protein bS16cz</fullName>
    </recommendedName>
    <alternativeName>
        <fullName evidence="1">30S ribosomal protein S16, chloroplastic</fullName>
    </alternativeName>
</protein>
<geneLocation type="chloroplast"/>
<comment type="subcellular location">
    <subcellularLocation>
        <location>Plastid</location>
        <location>Chloroplast</location>
    </subcellularLocation>
</comment>
<comment type="induction">
    <text evidence="4">Transcribed and spliced in green leaves.</text>
</comment>
<comment type="miscellaneous">
    <text evidence="2">The nucleus encodes 2 genes for bS16c that can be imported into chloroplasts in vitro (At4g34620, AC O65686 and At5g56940, AC Q9LTS6).</text>
</comment>
<comment type="similarity">
    <text evidence="1">Belongs to the bacterial ribosomal protein bS16 family.</text>
</comment>
<keyword id="KW-0150">Chloroplast</keyword>
<keyword id="KW-0934">Plastid</keyword>
<keyword id="KW-1185">Reference proteome</keyword>
<keyword id="KW-0687">Ribonucleoprotein</keyword>
<keyword id="KW-0689">Ribosomal protein</keyword>
<reference key="1">
    <citation type="journal article" date="1999" name="DNA Res.">
        <title>Complete structure of the chloroplast genome of Arabidopsis thaliana.</title>
        <authorList>
            <person name="Sato S."/>
            <person name="Nakamura Y."/>
            <person name="Kaneko T."/>
            <person name="Asamizu E."/>
            <person name="Tabata S."/>
        </authorList>
    </citation>
    <scope>NUCLEOTIDE SEQUENCE [LARGE SCALE GENOMIC DNA]</scope>
    <source>
        <strain>cv. Columbia</strain>
    </source>
</reference>
<reference key="2">
    <citation type="journal article" date="2008" name="Mol. Biol. Evol.">
        <title>Substitution of the gene for chloroplast RPS16 was assisted by generation of a dual targeting signal.</title>
        <authorList>
            <person name="Ueda M."/>
            <person name="Nishikawa T."/>
            <person name="Fujimoto M."/>
            <person name="Takanashi H."/>
            <person name="Arimura S."/>
            <person name="Tsutsumi N."/>
            <person name="Kadowaki K."/>
        </authorList>
    </citation>
    <scope>INDUCTION</scope>
    <source>
        <strain>cv. Columbia</strain>
        <tissue>Leaf</tissue>
    </source>
</reference>
<reference key="3">
    <citation type="journal article" date="2023" name="Plant Cell">
        <title>An updated nomenclature for plant ribosomal protein genes.</title>
        <authorList>
            <person name="Scarpin M.R."/>
            <person name="Busche M."/>
            <person name="Martinez R.E."/>
            <person name="Harper L.C."/>
            <person name="Reiser L."/>
            <person name="Szakonyi D."/>
            <person name="Merchante C."/>
            <person name="Lan T."/>
            <person name="Xiong W."/>
            <person name="Mo B."/>
            <person name="Tang G."/>
            <person name="Chen X."/>
            <person name="Bailey-Serres J."/>
            <person name="Browning K.S."/>
            <person name="Brunkard J.O."/>
        </authorList>
    </citation>
    <scope>NOMENCLATURE</scope>
</reference>
<organism>
    <name type="scientific">Arabidopsis thaliana</name>
    <name type="common">Mouse-ear cress</name>
    <dbReference type="NCBI Taxonomy" id="3702"/>
    <lineage>
        <taxon>Eukaryota</taxon>
        <taxon>Viridiplantae</taxon>
        <taxon>Streptophyta</taxon>
        <taxon>Embryophyta</taxon>
        <taxon>Tracheophyta</taxon>
        <taxon>Spermatophyta</taxon>
        <taxon>Magnoliopsida</taxon>
        <taxon>eudicotyledons</taxon>
        <taxon>Gunneridae</taxon>
        <taxon>Pentapetalae</taxon>
        <taxon>rosids</taxon>
        <taxon>malvids</taxon>
        <taxon>Brassicales</taxon>
        <taxon>Brassicaceae</taxon>
        <taxon>Camelineae</taxon>
        <taxon>Arabidopsis</taxon>
    </lineage>
</organism>